<sequence length="144" mass="16264">MLQPKKTKFRRQQKGRAKGNAQRGNQLAFGSFGIKALETKWITGRQIEAARIAVTRYMQRQGQIWIRIFPDKPITRKPADVRMGKGKGSPEGFVAPVTPGRIIIEAEGVSYEIAKEALRLAAQKLPITTKFVVRRDYDIQNQNA</sequence>
<comment type="function">
    <text evidence="1">Binds 23S rRNA and is also seen to make contacts with the A and possibly P site tRNAs.</text>
</comment>
<comment type="subunit">
    <text evidence="1">Part of the 50S ribosomal subunit.</text>
</comment>
<comment type="similarity">
    <text evidence="1">Belongs to the universal ribosomal protein uL16 family.</text>
</comment>
<gene>
    <name evidence="1" type="primary">rplP</name>
    <name type="ordered locus">BF3996</name>
</gene>
<organism>
    <name type="scientific">Bacteroides fragilis (strain ATCC 25285 / DSM 2151 / CCUG 4856 / JCM 11019 / LMG 10263 / NCTC 9343 / Onslow / VPI 2553 / EN-2)</name>
    <dbReference type="NCBI Taxonomy" id="272559"/>
    <lineage>
        <taxon>Bacteria</taxon>
        <taxon>Pseudomonadati</taxon>
        <taxon>Bacteroidota</taxon>
        <taxon>Bacteroidia</taxon>
        <taxon>Bacteroidales</taxon>
        <taxon>Bacteroidaceae</taxon>
        <taxon>Bacteroides</taxon>
    </lineage>
</organism>
<reference key="1">
    <citation type="journal article" date="2005" name="Science">
        <title>Extensive DNA inversions in the B. fragilis genome control variable gene expression.</title>
        <authorList>
            <person name="Cerdeno-Tarraga A.-M."/>
            <person name="Patrick S."/>
            <person name="Crossman L.C."/>
            <person name="Blakely G."/>
            <person name="Abratt V."/>
            <person name="Lennard N."/>
            <person name="Poxton I."/>
            <person name="Duerden B."/>
            <person name="Harris B."/>
            <person name="Quail M.A."/>
            <person name="Barron A."/>
            <person name="Clark L."/>
            <person name="Corton C."/>
            <person name="Doggett J."/>
            <person name="Holden M.T.G."/>
            <person name="Larke N."/>
            <person name="Line A."/>
            <person name="Lord A."/>
            <person name="Norbertczak H."/>
            <person name="Ormond D."/>
            <person name="Price C."/>
            <person name="Rabbinowitsch E."/>
            <person name="Woodward J."/>
            <person name="Barrell B.G."/>
            <person name="Parkhill J."/>
        </authorList>
    </citation>
    <scope>NUCLEOTIDE SEQUENCE [LARGE SCALE GENOMIC DNA]</scope>
    <source>
        <strain>ATCC 25285 / DSM 2151 / CCUG 4856 / JCM 11019 / LMG 10263 / NCTC 9343 / Onslow / VPI 2553 / EN-2</strain>
    </source>
</reference>
<feature type="chain" id="PRO_0000062046" description="Large ribosomal subunit protein uL16">
    <location>
        <begin position="1"/>
        <end position="144"/>
    </location>
</feature>
<feature type="region of interest" description="Disordered" evidence="2">
    <location>
        <begin position="1"/>
        <end position="22"/>
    </location>
</feature>
<feature type="compositionally biased region" description="Basic residues" evidence="2">
    <location>
        <begin position="1"/>
        <end position="17"/>
    </location>
</feature>
<protein>
    <recommendedName>
        <fullName evidence="1">Large ribosomal subunit protein uL16</fullName>
    </recommendedName>
    <alternativeName>
        <fullName evidence="3">50S ribosomal protein L16</fullName>
    </alternativeName>
</protein>
<keyword id="KW-0687">Ribonucleoprotein</keyword>
<keyword id="KW-0689">Ribosomal protein</keyword>
<keyword id="KW-0694">RNA-binding</keyword>
<keyword id="KW-0699">rRNA-binding</keyword>
<keyword id="KW-0820">tRNA-binding</keyword>
<name>RL16_BACFN</name>
<proteinExistence type="inferred from homology"/>
<accession>Q5L8B6</accession>
<dbReference type="EMBL" id="CR626927">
    <property type="protein sequence ID" value="CAH09672.1"/>
    <property type="molecule type" value="Genomic_DNA"/>
</dbReference>
<dbReference type="RefSeq" id="WP_005791549.1">
    <property type="nucleotide sequence ID" value="NZ_UFTH01000001.1"/>
</dbReference>
<dbReference type="SMR" id="Q5L8B6"/>
<dbReference type="PaxDb" id="272559-BF9343_3891"/>
<dbReference type="GeneID" id="93105317"/>
<dbReference type="KEGG" id="bfs:BF9343_3891"/>
<dbReference type="eggNOG" id="COG0197">
    <property type="taxonomic scope" value="Bacteria"/>
</dbReference>
<dbReference type="HOGENOM" id="CLU_078858_2_1_10"/>
<dbReference type="Proteomes" id="UP000006731">
    <property type="component" value="Chromosome"/>
</dbReference>
<dbReference type="GO" id="GO:0022625">
    <property type="term" value="C:cytosolic large ribosomal subunit"/>
    <property type="evidence" value="ECO:0007669"/>
    <property type="project" value="TreeGrafter"/>
</dbReference>
<dbReference type="GO" id="GO:0019843">
    <property type="term" value="F:rRNA binding"/>
    <property type="evidence" value="ECO:0007669"/>
    <property type="project" value="UniProtKB-UniRule"/>
</dbReference>
<dbReference type="GO" id="GO:0003735">
    <property type="term" value="F:structural constituent of ribosome"/>
    <property type="evidence" value="ECO:0007669"/>
    <property type="project" value="InterPro"/>
</dbReference>
<dbReference type="GO" id="GO:0000049">
    <property type="term" value="F:tRNA binding"/>
    <property type="evidence" value="ECO:0007669"/>
    <property type="project" value="UniProtKB-KW"/>
</dbReference>
<dbReference type="GO" id="GO:0006412">
    <property type="term" value="P:translation"/>
    <property type="evidence" value="ECO:0007669"/>
    <property type="project" value="UniProtKB-UniRule"/>
</dbReference>
<dbReference type="CDD" id="cd01433">
    <property type="entry name" value="Ribosomal_L16_L10e"/>
    <property type="match status" value="1"/>
</dbReference>
<dbReference type="FunFam" id="3.90.1170.10:FF:000001">
    <property type="entry name" value="50S ribosomal protein L16"/>
    <property type="match status" value="1"/>
</dbReference>
<dbReference type="Gene3D" id="3.90.1170.10">
    <property type="entry name" value="Ribosomal protein L10e/L16"/>
    <property type="match status" value="1"/>
</dbReference>
<dbReference type="HAMAP" id="MF_01342">
    <property type="entry name" value="Ribosomal_uL16"/>
    <property type="match status" value="1"/>
</dbReference>
<dbReference type="InterPro" id="IPR047873">
    <property type="entry name" value="Ribosomal_uL16"/>
</dbReference>
<dbReference type="InterPro" id="IPR000114">
    <property type="entry name" value="Ribosomal_uL16_bact-type"/>
</dbReference>
<dbReference type="InterPro" id="IPR020798">
    <property type="entry name" value="Ribosomal_uL16_CS"/>
</dbReference>
<dbReference type="InterPro" id="IPR016180">
    <property type="entry name" value="Ribosomal_uL16_dom"/>
</dbReference>
<dbReference type="InterPro" id="IPR036920">
    <property type="entry name" value="Ribosomal_uL16_sf"/>
</dbReference>
<dbReference type="NCBIfam" id="TIGR01164">
    <property type="entry name" value="rplP_bact"/>
    <property type="match status" value="1"/>
</dbReference>
<dbReference type="PANTHER" id="PTHR12220">
    <property type="entry name" value="50S/60S RIBOSOMAL PROTEIN L16"/>
    <property type="match status" value="1"/>
</dbReference>
<dbReference type="PANTHER" id="PTHR12220:SF13">
    <property type="entry name" value="LARGE RIBOSOMAL SUBUNIT PROTEIN UL16M"/>
    <property type="match status" value="1"/>
</dbReference>
<dbReference type="Pfam" id="PF00252">
    <property type="entry name" value="Ribosomal_L16"/>
    <property type="match status" value="1"/>
</dbReference>
<dbReference type="PRINTS" id="PR00060">
    <property type="entry name" value="RIBOSOMALL16"/>
</dbReference>
<dbReference type="SUPFAM" id="SSF54686">
    <property type="entry name" value="Ribosomal protein L16p/L10e"/>
    <property type="match status" value="1"/>
</dbReference>
<dbReference type="PROSITE" id="PS00701">
    <property type="entry name" value="RIBOSOMAL_L16_2"/>
    <property type="match status" value="1"/>
</dbReference>
<evidence type="ECO:0000255" key="1">
    <source>
        <dbReference type="HAMAP-Rule" id="MF_01342"/>
    </source>
</evidence>
<evidence type="ECO:0000256" key="2">
    <source>
        <dbReference type="SAM" id="MobiDB-lite"/>
    </source>
</evidence>
<evidence type="ECO:0000305" key="3"/>